<organism>
    <name type="scientific">Pseudomonas fluorescens (strain ATCC BAA-477 / NRRL B-23932 / Pf-5)</name>
    <dbReference type="NCBI Taxonomy" id="220664"/>
    <lineage>
        <taxon>Bacteria</taxon>
        <taxon>Pseudomonadati</taxon>
        <taxon>Pseudomonadota</taxon>
        <taxon>Gammaproteobacteria</taxon>
        <taxon>Pseudomonadales</taxon>
        <taxon>Pseudomonadaceae</taxon>
        <taxon>Pseudomonas</taxon>
    </lineage>
</organism>
<feature type="chain" id="PRO_0000303110" description="Malonate decarboxylase acyl carrier protein">
    <location>
        <begin position="1"/>
        <end position="99"/>
    </location>
</feature>
<feature type="modified residue" description="O-(phosphoribosyl dephospho-coenzyme A)serine" evidence="1">
    <location>
        <position position="25"/>
    </location>
</feature>
<feature type="strand" evidence="2">
    <location>
        <begin position="2"/>
        <end position="9"/>
    </location>
</feature>
<feature type="strand" evidence="2">
    <location>
        <begin position="18"/>
        <end position="21"/>
    </location>
</feature>
<feature type="strand" evidence="2">
    <location>
        <begin position="27"/>
        <end position="34"/>
    </location>
</feature>
<feature type="strand" evidence="2">
    <location>
        <begin position="39"/>
        <end position="48"/>
    </location>
</feature>
<feature type="helix" evidence="2">
    <location>
        <begin position="52"/>
        <end position="62"/>
    </location>
</feature>
<feature type="turn" evidence="2">
    <location>
        <begin position="63"/>
        <end position="65"/>
    </location>
</feature>
<feature type="strand" evidence="2">
    <location>
        <begin position="70"/>
        <end position="79"/>
    </location>
</feature>
<feature type="helix" evidence="2">
    <location>
        <begin position="82"/>
        <end position="96"/>
    </location>
</feature>
<dbReference type="EMBL" id="CP000076">
    <property type="protein sequence ID" value="AAY95008.1"/>
    <property type="molecule type" value="Genomic_DNA"/>
</dbReference>
<dbReference type="RefSeq" id="WP_011063992.1">
    <property type="nucleotide sequence ID" value="NC_004129.6"/>
</dbReference>
<dbReference type="PDB" id="5VIT">
    <property type="method" value="X-ray"/>
    <property type="resolution" value="2.20 A"/>
    <property type="chains" value="C/K/R/X=1-99"/>
</dbReference>
<dbReference type="PDB" id="5VJ1">
    <property type="method" value="X-ray"/>
    <property type="resolution" value="3.00 A"/>
    <property type="chains" value="C/K=1-99"/>
</dbReference>
<dbReference type="PDBsum" id="5VIT"/>
<dbReference type="PDBsum" id="5VJ1"/>
<dbReference type="SMR" id="Q4K4F7"/>
<dbReference type="IntAct" id="Q4K4F7">
    <property type="interactions" value="3"/>
</dbReference>
<dbReference type="STRING" id="220664.PFL_5818"/>
<dbReference type="KEGG" id="pfl:PFL_5818"/>
<dbReference type="PATRIC" id="fig|220664.5.peg.5932"/>
<dbReference type="eggNOG" id="COG3052">
    <property type="taxonomic scope" value="Bacteria"/>
</dbReference>
<dbReference type="HOGENOM" id="CLU_173135_1_0_6"/>
<dbReference type="Proteomes" id="UP000008540">
    <property type="component" value="Chromosome"/>
</dbReference>
<dbReference type="GO" id="GO:0005737">
    <property type="term" value="C:cytoplasm"/>
    <property type="evidence" value="ECO:0007669"/>
    <property type="project" value="UniProtKB-SubCell"/>
</dbReference>
<dbReference type="GO" id="GO:0000036">
    <property type="term" value="F:acyl carrier activity"/>
    <property type="evidence" value="ECO:0007669"/>
    <property type="project" value="UniProtKB-UniRule"/>
</dbReference>
<dbReference type="HAMAP" id="MF_00710">
    <property type="entry name" value="Malonate_deCO2ase_dsu"/>
    <property type="match status" value="1"/>
</dbReference>
<dbReference type="InterPro" id="IPR023439">
    <property type="entry name" value="Mal_deCO2ase/Cit_lyase_ACP"/>
</dbReference>
<dbReference type="InterPro" id="IPR009662">
    <property type="entry name" value="Malonate_deCO2ase_dsu"/>
</dbReference>
<dbReference type="NCBIfam" id="TIGR03130">
    <property type="entry name" value="malonate_delta"/>
    <property type="match status" value="1"/>
</dbReference>
<dbReference type="NCBIfam" id="NF002293">
    <property type="entry name" value="PRK01220.1"/>
    <property type="match status" value="1"/>
</dbReference>
<dbReference type="Pfam" id="PF06857">
    <property type="entry name" value="ACP"/>
    <property type="match status" value="1"/>
</dbReference>
<name>MDCC_PSEF5</name>
<gene>
    <name evidence="1" type="primary">mdcC</name>
    <name type="ordered locus">PFL_5818</name>
</gene>
<comment type="function">
    <text evidence="1">Subunit of malonate decarboxylase, it is an acyl carrier protein to which acetyl and malonyl thioester residues are bound via a 2'-(5''-phosphoribosyl)-3'-dephospho-CoA prosthetic group and turn over during the catalytic mechanism.</text>
</comment>
<comment type="subcellular location">
    <subcellularLocation>
        <location evidence="1">Cytoplasm</location>
    </subcellularLocation>
</comment>
<comment type="PTM">
    <text evidence="1">Covalently binds the prosthetic group of malonate decarboxylase.</text>
</comment>
<comment type="similarity">
    <text evidence="1">Belongs to the MdcC family.</text>
</comment>
<reference key="1">
    <citation type="journal article" date="2005" name="Nat. Biotechnol.">
        <title>Complete genome sequence of the plant commensal Pseudomonas fluorescens Pf-5.</title>
        <authorList>
            <person name="Paulsen I.T."/>
            <person name="Press C.M."/>
            <person name="Ravel J."/>
            <person name="Kobayashi D.Y."/>
            <person name="Myers G.S.A."/>
            <person name="Mavrodi D.V."/>
            <person name="DeBoy R.T."/>
            <person name="Seshadri R."/>
            <person name="Ren Q."/>
            <person name="Madupu R."/>
            <person name="Dodson R.J."/>
            <person name="Durkin A.S."/>
            <person name="Brinkac L.M."/>
            <person name="Daugherty S.C."/>
            <person name="Sullivan S.A."/>
            <person name="Rosovitz M.J."/>
            <person name="Gwinn M.L."/>
            <person name="Zhou L."/>
            <person name="Schneider D.J."/>
            <person name="Cartinhour S.W."/>
            <person name="Nelson W.C."/>
            <person name="Weidman J."/>
            <person name="Watkins K."/>
            <person name="Tran K."/>
            <person name="Khouri H."/>
            <person name="Pierson E.A."/>
            <person name="Pierson L.S. III"/>
            <person name="Thomashow L.S."/>
            <person name="Loper J.E."/>
        </authorList>
    </citation>
    <scope>NUCLEOTIDE SEQUENCE [LARGE SCALE GENOMIC DNA]</scope>
    <source>
        <strain>ATCC BAA-477 / NRRL B-23932 / Pf-5</strain>
    </source>
</reference>
<sequence length="99" mass="10683">METLSFEFPAGQPGRGRALVGCVGSGDLEVLLEPGQPGKLSIQVQTSVNGSASRWQHLFERLFDGQTPPALLIDIHDFGATPGVVRLRLEQGFEEIGHD</sequence>
<accession>Q4K4F7</accession>
<evidence type="ECO:0000255" key="1">
    <source>
        <dbReference type="HAMAP-Rule" id="MF_00710"/>
    </source>
</evidence>
<evidence type="ECO:0007829" key="2">
    <source>
        <dbReference type="PDB" id="5VIT"/>
    </source>
</evidence>
<proteinExistence type="evidence at protein level"/>
<protein>
    <recommendedName>
        <fullName evidence="1">Malonate decarboxylase acyl carrier protein</fullName>
    </recommendedName>
    <alternativeName>
        <fullName evidence="1">Malonate decarboxylase subunit delta</fullName>
    </alternativeName>
</protein>
<keyword id="KW-0002">3D-structure</keyword>
<keyword id="KW-0963">Cytoplasm</keyword>
<keyword id="KW-0597">Phosphoprotein</keyword>